<keyword id="KW-0068">Autocatalytic cleavage</keyword>
<keyword id="KW-0210">Decarboxylase</keyword>
<keyword id="KW-0456">Lyase</keyword>
<keyword id="KW-0620">Polyamine biosynthesis</keyword>
<keyword id="KW-0670">Pyruvate</keyword>
<keyword id="KW-1185">Reference proteome</keyword>
<keyword id="KW-0949">S-adenosyl-L-methionine</keyword>
<keyword id="KW-0704">Schiff base</keyword>
<keyword id="KW-0745">Spermidine biosynthesis</keyword>
<keyword id="KW-0865">Zymogen</keyword>
<accession>A2XV58</accession>
<accession>O24215</accession>
<accession>O81269</accession>
<accession>Q56CX9</accession>
<accession>Q7XU78</accession>
<accession>Q7XUL0</accession>
<accession>Q9SC65</accession>
<organism>
    <name type="scientific">Oryza sativa subsp. indica</name>
    <name type="common">Rice</name>
    <dbReference type="NCBI Taxonomy" id="39946"/>
    <lineage>
        <taxon>Eukaryota</taxon>
        <taxon>Viridiplantae</taxon>
        <taxon>Streptophyta</taxon>
        <taxon>Embryophyta</taxon>
        <taxon>Tracheophyta</taxon>
        <taxon>Spermatophyta</taxon>
        <taxon>Magnoliopsida</taxon>
        <taxon>Liliopsida</taxon>
        <taxon>Poales</taxon>
        <taxon>Poaceae</taxon>
        <taxon>BOP clade</taxon>
        <taxon>Oryzoideae</taxon>
        <taxon>Oryzeae</taxon>
        <taxon>Oryzinae</taxon>
        <taxon>Oryza</taxon>
        <taxon>Oryza sativa</taxon>
    </lineage>
</organism>
<comment type="catalytic activity">
    <reaction>
        <text>S-adenosyl-L-methionine + H(+) = S-adenosyl 3-(methylsulfanyl)propylamine + CO2</text>
        <dbReference type="Rhea" id="RHEA:15981"/>
        <dbReference type="ChEBI" id="CHEBI:15378"/>
        <dbReference type="ChEBI" id="CHEBI:16526"/>
        <dbReference type="ChEBI" id="CHEBI:57443"/>
        <dbReference type="ChEBI" id="CHEBI:59789"/>
        <dbReference type="EC" id="4.1.1.50"/>
    </reaction>
</comment>
<comment type="cofactor">
    <cofactor>
        <name>pyruvate</name>
        <dbReference type="ChEBI" id="CHEBI:15361"/>
    </cofactor>
    <text>Binds 1 pyruvoyl group covalently per subunit.</text>
</comment>
<comment type="pathway">
    <text>Amine and polyamine biosynthesis; S-adenosylmethioninamine biosynthesis; S-adenosylmethioninamine from S-adenosyl-L-methionine: step 1/1.</text>
</comment>
<comment type="PTM">
    <text evidence="1">Is synthesized initially as an inactive proenzyme. Formation of the active enzyme involves a self-maturation process in which the active site pyruvoyl group is generated from an internal serine residue via an autocatalytic post-translational modification. Two non-identical subunits are generated from the proenzyme in this reaction, and the pyruvate is formed at the N-terminus of the alpha chain, which is derived from the carboxyl end of the proenzyme. The post-translation cleavage follows an unusual pathway, termed non-hydrolytic serinolysis, in which the side chain hydroxyl group of the serine supplies its oxygen atom to form the C-terminus of the beta chain, while the remainder of the serine residue undergoes an oxidative deamination to produce ammonia and the pyruvoyl group blocking the N-terminus of the alpha chain (By similarity).</text>
</comment>
<comment type="similarity">
    <text evidence="2">Belongs to the eukaryotic AdoMetDC family.</text>
</comment>
<comment type="sequence caution" evidence="2">
    <conflict type="erroneous gene model prediction">
        <sequence resource="EMBL-CDS" id="EAY94718"/>
    </conflict>
</comment>
<reference key="1">
    <citation type="journal article" date="2000" name="Theor. Appl. Genet.">
        <title>Differential accumulation of S-adenosylmethionine decarboxylase transcript in rice seedlings in response to salt and drought stresses.</title>
        <authorList>
            <person name="Li Z.Y."/>
            <person name="Chen S.Y."/>
        </authorList>
        <dbReference type="AGRICOLA" id="IND22302496"/>
    </citation>
    <scope>NUCLEOTIDE SEQUENCE [MRNA]</scope>
</reference>
<reference key="2">
    <citation type="journal article" date="2001" name="Biochem. J.">
        <title>Characterization of monocot and dicot plant S-adenosyl-L-methionine decarboxylase gene families including identification in the mRNA of a highly conserved pair of upstream overlapping open reading frames.</title>
        <authorList>
            <person name="Franceschetti M."/>
            <person name="Hanfrey C."/>
            <person name="Scaramagli S."/>
            <person name="Torrigiani P."/>
            <person name="Bagni N."/>
            <person name="Michael A.J."/>
        </authorList>
    </citation>
    <scope>NUCLEOTIDE SEQUENCE [GENOMIC DNA]</scope>
</reference>
<reference key="3">
    <citation type="submission" date="2005-03" db="EMBL/GenBank/DDBJ databases">
        <title>cDNA of S-adenosylmethionine decarboxylase from Oryza sativa var. pokkali.</title>
        <authorList>
            <person name="Laha S."/>
            <person name="Majumder G."/>
            <person name="Sengupta D.N."/>
        </authorList>
    </citation>
    <scope>NUCLEOTIDE SEQUENCE [MRNA]</scope>
    <source>
        <strain>cv. Pokkali</strain>
        <tissue>Root</tissue>
    </source>
</reference>
<reference key="4">
    <citation type="journal article" date="2005" name="PLoS Biol.">
        <title>The genomes of Oryza sativa: a history of duplications.</title>
        <authorList>
            <person name="Yu J."/>
            <person name="Wang J."/>
            <person name="Lin W."/>
            <person name="Li S."/>
            <person name="Li H."/>
            <person name="Zhou J."/>
            <person name="Ni P."/>
            <person name="Dong W."/>
            <person name="Hu S."/>
            <person name="Zeng C."/>
            <person name="Zhang J."/>
            <person name="Zhang Y."/>
            <person name="Li R."/>
            <person name="Xu Z."/>
            <person name="Li S."/>
            <person name="Li X."/>
            <person name="Zheng H."/>
            <person name="Cong L."/>
            <person name="Lin L."/>
            <person name="Yin J."/>
            <person name="Geng J."/>
            <person name="Li G."/>
            <person name="Shi J."/>
            <person name="Liu J."/>
            <person name="Lv H."/>
            <person name="Li J."/>
            <person name="Wang J."/>
            <person name="Deng Y."/>
            <person name="Ran L."/>
            <person name="Shi X."/>
            <person name="Wang X."/>
            <person name="Wu Q."/>
            <person name="Li C."/>
            <person name="Ren X."/>
            <person name="Wang J."/>
            <person name="Wang X."/>
            <person name="Li D."/>
            <person name="Liu D."/>
            <person name="Zhang X."/>
            <person name="Ji Z."/>
            <person name="Zhao W."/>
            <person name="Sun Y."/>
            <person name="Zhang Z."/>
            <person name="Bao J."/>
            <person name="Han Y."/>
            <person name="Dong L."/>
            <person name="Ji J."/>
            <person name="Chen P."/>
            <person name="Wu S."/>
            <person name="Liu J."/>
            <person name="Xiao Y."/>
            <person name="Bu D."/>
            <person name="Tan J."/>
            <person name="Yang L."/>
            <person name="Ye C."/>
            <person name="Zhang J."/>
            <person name="Xu J."/>
            <person name="Zhou Y."/>
            <person name="Yu Y."/>
            <person name="Zhang B."/>
            <person name="Zhuang S."/>
            <person name="Wei H."/>
            <person name="Liu B."/>
            <person name="Lei M."/>
            <person name="Yu H."/>
            <person name="Li Y."/>
            <person name="Xu H."/>
            <person name="Wei S."/>
            <person name="He X."/>
            <person name="Fang L."/>
            <person name="Zhang Z."/>
            <person name="Zhang Y."/>
            <person name="Huang X."/>
            <person name="Su Z."/>
            <person name="Tong W."/>
            <person name="Li J."/>
            <person name="Tong Z."/>
            <person name="Li S."/>
            <person name="Ye J."/>
            <person name="Wang L."/>
            <person name="Fang L."/>
            <person name="Lei T."/>
            <person name="Chen C.-S."/>
            <person name="Chen H.-C."/>
            <person name="Xu Z."/>
            <person name="Li H."/>
            <person name="Huang H."/>
            <person name="Zhang F."/>
            <person name="Xu H."/>
            <person name="Li N."/>
            <person name="Zhao C."/>
            <person name="Li S."/>
            <person name="Dong L."/>
            <person name="Huang Y."/>
            <person name="Li L."/>
            <person name="Xi Y."/>
            <person name="Qi Q."/>
            <person name="Li W."/>
            <person name="Zhang B."/>
            <person name="Hu W."/>
            <person name="Zhang Y."/>
            <person name="Tian X."/>
            <person name="Jiao Y."/>
            <person name="Liang X."/>
            <person name="Jin J."/>
            <person name="Gao L."/>
            <person name="Zheng W."/>
            <person name="Hao B."/>
            <person name="Liu S.-M."/>
            <person name="Wang W."/>
            <person name="Yuan L."/>
            <person name="Cao M."/>
            <person name="McDermott J."/>
            <person name="Samudrala R."/>
            <person name="Wang J."/>
            <person name="Wong G.K.-S."/>
            <person name="Yang H."/>
        </authorList>
    </citation>
    <scope>NUCLEOTIDE SEQUENCE [LARGE SCALE GENOMIC DNA]</scope>
    <source>
        <strain>cv. 93-11</strain>
    </source>
</reference>
<gene>
    <name type="primary">SAMDC</name>
    <name type="ORF">OsI_015951</name>
</gene>
<feature type="chain" id="PRO_0000302051" description="S-adenosylmethionine decarboxylase beta chain" evidence="1">
    <location>
        <begin position="1"/>
        <end position="77"/>
    </location>
</feature>
<feature type="chain" id="PRO_0000302052" description="S-adenosylmethionine decarboxylase alpha chain" evidence="1">
    <location>
        <begin position="78"/>
        <end position="398"/>
    </location>
</feature>
<feature type="active site" evidence="1">
    <location>
        <position position="18"/>
    </location>
</feature>
<feature type="active site" evidence="1">
    <location>
        <position position="21"/>
    </location>
</feature>
<feature type="active site" description="Schiff-base intermediate with substrate; via pyruvic acid" evidence="1">
    <location>
        <position position="78"/>
    </location>
</feature>
<feature type="active site" description="Proton donor; for catalytic activity" evidence="1">
    <location>
        <position position="92"/>
    </location>
</feature>
<feature type="active site" description="Proton acceptor; for processing activity" evidence="1">
    <location>
        <position position="243"/>
    </location>
</feature>
<feature type="active site" description="Proton acceptor; for processing activity" evidence="1">
    <location>
        <position position="256"/>
    </location>
</feature>
<feature type="site" description="Cleavage (non-hydrolytic); by autolysis" evidence="1">
    <location>
        <begin position="77"/>
        <end position="78"/>
    </location>
</feature>
<feature type="modified residue" description="Pyruvic acid (Ser); by autocatalysis" evidence="1">
    <location>
        <position position="78"/>
    </location>
</feature>
<feature type="sequence conflict" description="In Ref. 3; AAX76987." evidence="2" ref="3">
    <original>V</original>
    <variation>D</variation>
    <location>
        <position position="3"/>
    </location>
</feature>
<feature type="sequence conflict" description="In Ref. 2; CAB64671." evidence="2" ref="2">
    <original>K</original>
    <variation>R</variation>
    <location>
        <position position="96"/>
    </location>
</feature>
<feature type="sequence conflict" description="In Ref. 3; AAX76987." evidence="2" ref="3">
    <original>N</original>
    <variation>Y</variation>
    <location>
        <position position="157"/>
    </location>
</feature>
<feature type="sequence conflict" description="In Ref. 3; AAX76987." evidence="2" ref="3">
    <original>F</original>
    <variation>L</variation>
    <location>
        <position position="235"/>
    </location>
</feature>
<feature type="sequence conflict" description="In Ref. 3; AAX76987." evidence="2" ref="3">
    <original>S</original>
    <variation>T</variation>
    <location>
        <position position="294"/>
    </location>
</feature>
<feature type="sequence conflict" description="In Ref. 3; AAX76987." evidence="2" ref="3">
    <original>G</original>
    <variation>R</variation>
    <location>
        <position position="394"/>
    </location>
</feature>
<proteinExistence type="evidence at transcript level"/>
<protein>
    <recommendedName>
        <fullName>S-adenosylmethionine decarboxylase proenzyme</fullName>
        <shortName>AdoMetDC</shortName>
        <shortName>SAMDC</shortName>
        <ecNumber>4.1.1.50</ecNumber>
    </recommendedName>
    <component>
        <recommendedName>
            <fullName>S-adenosylmethionine decarboxylase alpha chain</fullName>
        </recommendedName>
    </component>
    <component>
        <recommendedName>
            <fullName>S-adenosylmethionine decarboxylase beta chain</fullName>
        </recommendedName>
    </component>
</protein>
<sequence>MGVLSAADPPPVSAIGFEGYEKRLEITFSEAPVFADPDGRGLRALSRAQIDSVLDLARCTIVSELSNKDFDSYVLSESSLFIYSDKIVIKTCGTTKLLLTIPRILELAEGLSMPLAAVKYSRGMFIFPSAQPAPHRSFSEEVAVLNRYFGHLKSGGNAYVIGDPAKPGQKWHIYYATQHPEQPMVTLEMCMTGLDKEKASVFFKTSADGHTSCAKEMTKLSGISDIIPEMEICDFDFEPCGYSMNAIHGLAFSTIHVTPEDGFSYASYEVVGFDASTLAYGDLVKRVLRCFGPSEFSVAVTIFGGHGHAGTWAKELNADAYKCNNMVEQELPCGGLLIYQSFDATEDVPVAVGSPKSVLHCFEAENMVNPAPVKEGKLGNLLPWGEDALEENDGVFDE</sequence>
<name>DCAM_ORYSI</name>
<evidence type="ECO:0000250" key="1"/>
<evidence type="ECO:0000305" key="2"/>
<dbReference type="EC" id="4.1.1.50"/>
<dbReference type="EMBL" id="AF067194">
    <property type="protein sequence ID" value="AAC79990.1"/>
    <property type="molecule type" value="mRNA"/>
</dbReference>
<dbReference type="EMBL" id="AJ252213">
    <property type="protein sequence ID" value="CAB64671.1"/>
    <property type="molecule type" value="Genomic_DNA"/>
</dbReference>
<dbReference type="EMBL" id="AY966487">
    <property type="protein sequence ID" value="AAX76987.1"/>
    <property type="molecule type" value="mRNA"/>
</dbReference>
<dbReference type="EMBL" id="CM000129">
    <property type="protein sequence ID" value="EAY94718.1"/>
    <property type="status" value="ALT_SEQ"/>
    <property type="molecule type" value="Genomic_DNA"/>
</dbReference>
<dbReference type="SMR" id="A2XV58"/>
<dbReference type="STRING" id="39946.A2XV58"/>
<dbReference type="EnsemblPlants" id="OsGoSa_04g0018310.01">
    <property type="protein sequence ID" value="OsGoSa_04g0018310.01"/>
    <property type="gene ID" value="OsGoSa_04g0018310"/>
</dbReference>
<dbReference type="EnsemblPlants" id="OsGoSa_04g0018310.02">
    <property type="protein sequence ID" value="OsGoSa_04g0018310.02"/>
    <property type="gene ID" value="OsGoSa_04g0018310"/>
</dbReference>
<dbReference type="EnsemblPlants" id="OsGoSa_04g0018310.03">
    <property type="protein sequence ID" value="OsGoSa_04g0018310.03"/>
    <property type="gene ID" value="OsGoSa_04g0018310"/>
</dbReference>
<dbReference type="EnsemblPlants" id="OsGoSa_04g0018310.04">
    <property type="protein sequence ID" value="OsGoSa_04g0018310.04"/>
    <property type="gene ID" value="OsGoSa_04g0018310"/>
</dbReference>
<dbReference type="EnsemblPlants" id="OsIR64_04g0017870.01">
    <property type="protein sequence ID" value="OsIR64_04g0017870.01"/>
    <property type="gene ID" value="OsIR64_04g0017870"/>
</dbReference>
<dbReference type="EnsemblPlants" id="OsIR64_04g0017870.02">
    <property type="protein sequence ID" value="OsIR64_04g0017870.02"/>
    <property type="gene ID" value="OsIR64_04g0017870"/>
</dbReference>
<dbReference type="EnsemblPlants" id="OsIR64_04g0017870.03">
    <property type="protein sequence ID" value="OsIR64_04g0017870.03"/>
    <property type="gene ID" value="OsIR64_04g0017870"/>
</dbReference>
<dbReference type="EnsemblPlants" id="OsIR64_04g0017870.04">
    <property type="protein sequence ID" value="OsIR64_04g0017870.04"/>
    <property type="gene ID" value="OsIR64_04g0017870"/>
</dbReference>
<dbReference type="EnsemblPlants" id="OsKYG_04g0018210.01">
    <property type="protein sequence ID" value="OsKYG_04g0018210.01"/>
    <property type="gene ID" value="OsKYG_04g0018210"/>
</dbReference>
<dbReference type="EnsemblPlants" id="OsKYG_04g0018210.02">
    <property type="protein sequence ID" value="OsKYG_04g0018210.02"/>
    <property type="gene ID" value="OsKYG_04g0018210"/>
</dbReference>
<dbReference type="EnsemblPlants" id="OsKYG_04g0018210.03">
    <property type="protein sequence ID" value="OsKYG_04g0018210.03"/>
    <property type="gene ID" value="OsKYG_04g0018210"/>
</dbReference>
<dbReference type="EnsemblPlants" id="OsLaMu_04g0018860.01">
    <property type="protein sequence ID" value="OsLaMu_04g0018860.01"/>
    <property type="gene ID" value="OsLaMu_04g0018860"/>
</dbReference>
<dbReference type="EnsemblPlants" id="OsLaMu_04g0018860.02">
    <property type="protein sequence ID" value="OsLaMu_04g0018860.02"/>
    <property type="gene ID" value="OsLaMu_04g0018860"/>
</dbReference>
<dbReference type="EnsemblPlants" id="OsLaMu_04g0018860.03">
    <property type="protein sequence ID" value="OsLaMu_04g0018860.03"/>
    <property type="gene ID" value="OsLaMu_04g0018860"/>
</dbReference>
<dbReference type="EnsemblPlants" id="OsLaMu_04g0018860.04">
    <property type="protein sequence ID" value="OsLaMu_04g0018860.04"/>
    <property type="gene ID" value="OsLaMu_04g0018860"/>
</dbReference>
<dbReference type="EnsemblPlants" id="OsLima_04g0018360.01">
    <property type="protein sequence ID" value="OsLima_04g0018360.01"/>
    <property type="gene ID" value="OsLima_04g0018360"/>
</dbReference>
<dbReference type="EnsemblPlants" id="OsLima_04g0018360.02">
    <property type="protein sequence ID" value="OsLima_04g0018360.02"/>
    <property type="gene ID" value="OsLima_04g0018360"/>
</dbReference>
<dbReference type="EnsemblPlants" id="OsLima_04g0018360.03">
    <property type="protein sequence ID" value="OsLima_04g0018360.03"/>
    <property type="gene ID" value="OsLima_04g0018360"/>
</dbReference>
<dbReference type="EnsemblPlants" id="OsLima_04g0018360.04">
    <property type="protein sequence ID" value="OsLima_04g0018360.04"/>
    <property type="gene ID" value="OsLima_04g0018360"/>
</dbReference>
<dbReference type="EnsemblPlants" id="OsLiXu_04g0018720.01">
    <property type="protein sequence ID" value="OsLiXu_04g0018720.01"/>
    <property type="gene ID" value="OsLiXu_04g0018720"/>
</dbReference>
<dbReference type="EnsemblPlants" id="OsLiXu_04g0018720.02">
    <property type="protein sequence ID" value="OsLiXu_04g0018720.02"/>
    <property type="gene ID" value="OsLiXu_04g0018720"/>
</dbReference>
<dbReference type="EnsemblPlants" id="OsLiXu_04g0018720.03">
    <property type="protein sequence ID" value="OsLiXu_04g0018720.03"/>
    <property type="gene ID" value="OsLiXu_04g0018720"/>
</dbReference>
<dbReference type="EnsemblPlants" id="OsLiXu_04g0018720.04">
    <property type="protein sequence ID" value="OsLiXu_04g0018720.04"/>
    <property type="gene ID" value="OsLiXu_04g0018720"/>
</dbReference>
<dbReference type="EnsemblPlants" id="OsMH63_04G019180_01">
    <property type="protein sequence ID" value="OsMH63_04G019180_01"/>
    <property type="gene ID" value="OsMH63_04G019180"/>
</dbReference>
<dbReference type="EnsemblPlants" id="OsMH63_04G019180_02">
    <property type="protein sequence ID" value="OsMH63_04G019180_02"/>
    <property type="gene ID" value="OsMH63_04G019180"/>
</dbReference>
<dbReference type="EnsemblPlants" id="OsMH63_04G019180_03">
    <property type="protein sequence ID" value="OsMH63_04G019180_03"/>
    <property type="gene ID" value="OsMH63_04G019180"/>
</dbReference>
<dbReference type="EnsemblPlants" id="OsMH63_04G019180_04">
    <property type="protein sequence ID" value="OsMH63_04G019180_04"/>
    <property type="gene ID" value="OsMH63_04G019180"/>
</dbReference>
<dbReference type="EnsemblPlants" id="OsPr106_04g0019080.01">
    <property type="protein sequence ID" value="OsPr106_04g0019080.01"/>
    <property type="gene ID" value="OsPr106_04g0019080"/>
</dbReference>
<dbReference type="EnsemblPlants" id="OsPr106_04g0019080.02">
    <property type="protein sequence ID" value="OsPr106_04g0019080.02"/>
    <property type="gene ID" value="OsPr106_04g0019080"/>
</dbReference>
<dbReference type="EnsemblPlants" id="OsPr106_04g0019080.03">
    <property type="protein sequence ID" value="OsPr106_04g0019080.03"/>
    <property type="gene ID" value="OsPr106_04g0019080"/>
</dbReference>
<dbReference type="EnsemblPlants" id="OsPr106_04g0019080.04">
    <property type="protein sequence ID" value="OsPr106_04g0019080.04"/>
    <property type="gene ID" value="OsPr106_04g0019080"/>
</dbReference>
<dbReference type="EnsemblPlants" id="OsZS97_04G019160_01">
    <property type="protein sequence ID" value="OsZS97_04G019160_01"/>
    <property type="gene ID" value="OsZS97_04G019160"/>
</dbReference>
<dbReference type="EnsemblPlants" id="OsZS97_04G019160_04">
    <property type="protein sequence ID" value="OsZS97_04G019160_04"/>
    <property type="gene ID" value="OsZS97_04G019160"/>
</dbReference>
<dbReference type="EnsemblPlants" id="OsZS97_04G019160_05">
    <property type="protein sequence ID" value="OsZS97_04G019160_05"/>
    <property type="gene ID" value="OsZS97_04G019160"/>
</dbReference>
<dbReference type="Gramene" id="OsGoSa_04g0018310.01">
    <property type="protein sequence ID" value="OsGoSa_04g0018310.01"/>
    <property type="gene ID" value="OsGoSa_04g0018310"/>
</dbReference>
<dbReference type="Gramene" id="OsGoSa_04g0018310.02">
    <property type="protein sequence ID" value="OsGoSa_04g0018310.02"/>
    <property type="gene ID" value="OsGoSa_04g0018310"/>
</dbReference>
<dbReference type="Gramene" id="OsGoSa_04g0018310.03">
    <property type="protein sequence ID" value="OsGoSa_04g0018310.03"/>
    <property type="gene ID" value="OsGoSa_04g0018310"/>
</dbReference>
<dbReference type="Gramene" id="OsGoSa_04g0018310.04">
    <property type="protein sequence ID" value="OsGoSa_04g0018310.04"/>
    <property type="gene ID" value="OsGoSa_04g0018310"/>
</dbReference>
<dbReference type="Gramene" id="OsIR64_04g0017870.01">
    <property type="protein sequence ID" value="OsIR64_04g0017870.01"/>
    <property type="gene ID" value="OsIR64_04g0017870"/>
</dbReference>
<dbReference type="Gramene" id="OsIR64_04g0017870.02">
    <property type="protein sequence ID" value="OsIR64_04g0017870.02"/>
    <property type="gene ID" value="OsIR64_04g0017870"/>
</dbReference>
<dbReference type="Gramene" id="OsIR64_04g0017870.03">
    <property type="protein sequence ID" value="OsIR64_04g0017870.03"/>
    <property type="gene ID" value="OsIR64_04g0017870"/>
</dbReference>
<dbReference type="Gramene" id="OsIR64_04g0017870.04">
    <property type="protein sequence ID" value="OsIR64_04g0017870.04"/>
    <property type="gene ID" value="OsIR64_04g0017870"/>
</dbReference>
<dbReference type="Gramene" id="OsKYG_04g0018210.01">
    <property type="protein sequence ID" value="OsKYG_04g0018210.01"/>
    <property type="gene ID" value="OsKYG_04g0018210"/>
</dbReference>
<dbReference type="Gramene" id="OsKYG_04g0018210.02">
    <property type="protein sequence ID" value="OsKYG_04g0018210.02"/>
    <property type="gene ID" value="OsKYG_04g0018210"/>
</dbReference>
<dbReference type="Gramene" id="OsKYG_04g0018210.03">
    <property type="protein sequence ID" value="OsKYG_04g0018210.03"/>
    <property type="gene ID" value="OsKYG_04g0018210"/>
</dbReference>
<dbReference type="Gramene" id="OsLaMu_04g0018860.01">
    <property type="protein sequence ID" value="OsLaMu_04g0018860.01"/>
    <property type="gene ID" value="OsLaMu_04g0018860"/>
</dbReference>
<dbReference type="Gramene" id="OsLaMu_04g0018860.02">
    <property type="protein sequence ID" value="OsLaMu_04g0018860.02"/>
    <property type="gene ID" value="OsLaMu_04g0018860"/>
</dbReference>
<dbReference type="Gramene" id="OsLaMu_04g0018860.03">
    <property type="protein sequence ID" value="OsLaMu_04g0018860.03"/>
    <property type="gene ID" value="OsLaMu_04g0018860"/>
</dbReference>
<dbReference type="Gramene" id="OsLaMu_04g0018860.04">
    <property type="protein sequence ID" value="OsLaMu_04g0018860.04"/>
    <property type="gene ID" value="OsLaMu_04g0018860"/>
</dbReference>
<dbReference type="Gramene" id="OsLima_04g0018360.01">
    <property type="protein sequence ID" value="OsLima_04g0018360.01"/>
    <property type="gene ID" value="OsLima_04g0018360"/>
</dbReference>
<dbReference type="Gramene" id="OsLima_04g0018360.02">
    <property type="protein sequence ID" value="OsLima_04g0018360.02"/>
    <property type="gene ID" value="OsLima_04g0018360"/>
</dbReference>
<dbReference type="Gramene" id="OsLima_04g0018360.03">
    <property type="protein sequence ID" value="OsLima_04g0018360.03"/>
    <property type="gene ID" value="OsLima_04g0018360"/>
</dbReference>
<dbReference type="Gramene" id="OsLima_04g0018360.04">
    <property type="protein sequence ID" value="OsLima_04g0018360.04"/>
    <property type="gene ID" value="OsLima_04g0018360"/>
</dbReference>
<dbReference type="Gramene" id="OsLiXu_04g0018720.01">
    <property type="protein sequence ID" value="OsLiXu_04g0018720.01"/>
    <property type="gene ID" value="OsLiXu_04g0018720"/>
</dbReference>
<dbReference type="Gramene" id="OsLiXu_04g0018720.02">
    <property type="protein sequence ID" value="OsLiXu_04g0018720.02"/>
    <property type="gene ID" value="OsLiXu_04g0018720"/>
</dbReference>
<dbReference type="Gramene" id="OsLiXu_04g0018720.03">
    <property type="protein sequence ID" value="OsLiXu_04g0018720.03"/>
    <property type="gene ID" value="OsLiXu_04g0018720"/>
</dbReference>
<dbReference type="Gramene" id="OsLiXu_04g0018720.04">
    <property type="protein sequence ID" value="OsLiXu_04g0018720.04"/>
    <property type="gene ID" value="OsLiXu_04g0018720"/>
</dbReference>
<dbReference type="Gramene" id="OsMH63_04G019180_01">
    <property type="protein sequence ID" value="OsMH63_04G019180_01"/>
    <property type="gene ID" value="OsMH63_04G019180"/>
</dbReference>
<dbReference type="Gramene" id="OsMH63_04G019180_02">
    <property type="protein sequence ID" value="OsMH63_04G019180_02"/>
    <property type="gene ID" value="OsMH63_04G019180"/>
</dbReference>
<dbReference type="Gramene" id="OsMH63_04G019180_03">
    <property type="protein sequence ID" value="OsMH63_04G019180_03"/>
    <property type="gene ID" value="OsMH63_04G019180"/>
</dbReference>
<dbReference type="Gramene" id="OsMH63_04G019180_04">
    <property type="protein sequence ID" value="OsMH63_04G019180_04"/>
    <property type="gene ID" value="OsMH63_04G019180"/>
</dbReference>
<dbReference type="Gramene" id="OsPr106_04g0019080.01">
    <property type="protein sequence ID" value="OsPr106_04g0019080.01"/>
    <property type="gene ID" value="OsPr106_04g0019080"/>
</dbReference>
<dbReference type="Gramene" id="OsPr106_04g0019080.02">
    <property type="protein sequence ID" value="OsPr106_04g0019080.02"/>
    <property type="gene ID" value="OsPr106_04g0019080"/>
</dbReference>
<dbReference type="Gramene" id="OsPr106_04g0019080.03">
    <property type="protein sequence ID" value="OsPr106_04g0019080.03"/>
    <property type="gene ID" value="OsPr106_04g0019080"/>
</dbReference>
<dbReference type="Gramene" id="OsPr106_04g0019080.04">
    <property type="protein sequence ID" value="OsPr106_04g0019080.04"/>
    <property type="gene ID" value="OsPr106_04g0019080"/>
</dbReference>
<dbReference type="Gramene" id="OsZS97_04G019160_01">
    <property type="protein sequence ID" value="OsZS97_04G019160_01"/>
    <property type="gene ID" value="OsZS97_04G019160"/>
</dbReference>
<dbReference type="Gramene" id="OsZS97_04G019160_04">
    <property type="protein sequence ID" value="OsZS97_04G019160_04"/>
    <property type="gene ID" value="OsZS97_04G019160"/>
</dbReference>
<dbReference type="Gramene" id="OsZS97_04G019160_05">
    <property type="protein sequence ID" value="OsZS97_04G019160_05"/>
    <property type="gene ID" value="OsZS97_04G019160"/>
</dbReference>
<dbReference type="HOGENOM" id="CLU_023050_2_0_1"/>
<dbReference type="OrthoDB" id="1068353at2759"/>
<dbReference type="UniPathway" id="UPA00331">
    <property type="reaction ID" value="UER00451"/>
</dbReference>
<dbReference type="Proteomes" id="UP000007015">
    <property type="component" value="Chromosome 4"/>
</dbReference>
<dbReference type="GO" id="GO:0005829">
    <property type="term" value="C:cytosol"/>
    <property type="evidence" value="ECO:0007669"/>
    <property type="project" value="TreeGrafter"/>
</dbReference>
<dbReference type="GO" id="GO:0004014">
    <property type="term" value="F:adenosylmethionine decarboxylase activity"/>
    <property type="evidence" value="ECO:0007669"/>
    <property type="project" value="UniProtKB-EC"/>
</dbReference>
<dbReference type="GO" id="GO:0008295">
    <property type="term" value="P:spermidine biosynthetic process"/>
    <property type="evidence" value="ECO:0007669"/>
    <property type="project" value="UniProtKB-KW"/>
</dbReference>
<dbReference type="GO" id="GO:0006597">
    <property type="term" value="P:spermine biosynthetic process"/>
    <property type="evidence" value="ECO:0007669"/>
    <property type="project" value="InterPro"/>
</dbReference>
<dbReference type="FunFam" id="3.30.360.50:FF:000001">
    <property type="entry name" value="S-adenosylmethionine decarboxylase proenzyme"/>
    <property type="match status" value="1"/>
</dbReference>
<dbReference type="FunFam" id="3.60.90.10:FF:000002">
    <property type="entry name" value="S-adenosylmethionine decarboxylase proenzyme"/>
    <property type="match status" value="1"/>
</dbReference>
<dbReference type="Gene3D" id="3.30.360.50">
    <property type="entry name" value="S-adenosylmethionine decarboxylase"/>
    <property type="match status" value="1"/>
</dbReference>
<dbReference type="Gene3D" id="3.60.90.10">
    <property type="entry name" value="S-adenosylmethionine decarboxylase"/>
    <property type="match status" value="1"/>
</dbReference>
<dbReference type="InterPro" id="IPR048283">
    <property type="entry name" value="AdoMetDC-like"/>
</dbReference>
<dbReference type="InterPro" id="IPR001985">
    <property type="entry name" value="S-AdoMet_decarboxylase_euk"/>
</dbReference>
<dbReference type="InterPro" id="IPR016067">
    <property type="entry name" value="S-AdoMet_deCO2ase_core"/>
</dbReference>
<dbReference type="InterPro" id="IPR018166">
    <property type="entry name" value="S-AdoMet_deCO2ase_CS"/>
</dbReference>
<dbReference type="NCBIfam" id="TIGR00535">
    <property type="entry name" value="SAM_DCase"/>
    <property type="match status" value="1"/>
</dbReference>
<dbReference type="PANTHER" id="PTHR11570">
    <property type="entry name" value="S-ADENOSYLMETHIONINE DECARBOXYLASE"/>
    <property type="match status" value="1"/>
</dbReference>
<dbReference type="PANTHER" id="PTHR11570:SF24">
    <property type="entry name" value="S-ADENOSYLMETHIONINE DECARBOXYLASE PROENZYME"/>
    <property type="match status" value="1"/>
</dbReference>
<dbReference type="Pfam" id="PF01536">
    <property type="entry name" value="SAM_decarbox"/>
    <property type="match status" value="1"/>
</dbReference>
<dbReference type="PIRSF" id="PIRSF001355">
    <property type="entry name" value="S-AdenosylMet_decarboxylase"/>
    <property type="match status" value="1"/>
</dbReference>
<dbReference type="SUPFAM" id="SSF56276">
    <property type="entry name" value="S-adenosylmethionine decarboxylase"/>
    <property type="match status" value="1"/>
</dbReference>
<dbReference type="PROSITE" id="PS01336">
    <property type="entry name" value="ADOMETDC"/>
    <property type="match status" value="1"/>
</dbReference>